<evidence type="ECO:0000250" key="1"/>
<evidence type="ECO:0000255" key="2">
    <source>
        <dbReference type="PROSITE-ProRule" id="PRU00077"/>
    </source>
</evidence>
<evidence type="ECO:0000255" key="3">
    <source>
        <dbReference type="PROSITE-ProRule" id="PRU00448"/>
    </source>
</evidence>
<evidence type="ECO:0000256" key="4">
    <source>
        <dbReference type="SAM" id="MobiDB-lite"/>
    </source>
</evidence>
<evidence type="ECO:0000305" key="5"/>
<organism>
    <name type="scientific">Candida albicans (strain SC5314 / ATCC MYA-2876)</name>
    <name type="common">Yeast</name>
    <dbReference type="NCBI Taxonomy" id="237561"/>
    <lineage>
        <taxon>Eukaryota</taxon>
        <taxon>Fungi</taxon>
        <taxon>Dikarya</taxon>
        <taxon>Ascomycota</taxon>
        <taxon>Saccharomycotina</taxon>
        <taxon>Pichiomycetes</taxon>
        <taxon>Debaryomycetaceae</taxon>
        <taxon>Candida/Lodderomyces clade</taxon>
        <taxon>Candida</taxon>
    </lineage>
</organism>
<feature type="chain" id="PRO_0000308752" description="Increased rDNA silencing protein 4">
    <location>
        <begin position="1"/>
        <end position="638"/>
    </location>
</feature>
<feature type="domain" description="EH" evidence="2">
    <location>
        <begin position="539"/>
        <end position="628"/>
    </location>
</feature>
<feature type="domain" description="EF-hand" evidence="3">
    <location>
        <begin position="572"/>
        <end position="607"/>
    </location>
</feature>
<feature type="region of interest" description="Disordered" evidence="4">
    <location>
        <begin position="15"/>
        <end position="78"/>
    </location>
</feature>
<feature type="region of interest" description="Disordered" evidence="4">
    <location>
        <begin position="270"/>
        <end position="356"/>
    </location>
</feature>
<feature type="region of interest" description="Disordered" evidence="4">
    <location>
        <begin position="409"/>
        <end position="440"/>
    </location>
</feature>
<feature type="compositionally biased region" description="Polar residues" evidence="4">
    <location>
        <begin position="27"/>
        <end position="47"/>
    </location>
</feature>
<feature type="compositionally biased region" description="Low complexity" evidence="4">
    <location>
        <begin position="48"/>
        <end position="60"/>
    </location>
</feature>
<feature type="compositionally biased region" description="Basic and acidic residues" evidence="4">
    <location>
        <begin position="291"/>
        <end position="305"/>
    </location>
</feature>
<feature type="compositionally biased region" description="Polar residues" evidence="4">
    <location>
        <begin position="306"/>
        <end position="317"/>
    </location>
</feature>
<feature type="compositionally biased region" description="Low complexity" evidence="4">
    <location>
        <begin position="414"/>
        <end position="426"/>
    </location>
</feature>
<feature type="compositionally biased region" description="Polar residues" evidence="4">
    <location>
        <begin position="427"/>
        <end position="440"/>
    </location>
</feature>
<reference key="1">
    <citation type="journal article" date="2004" name="Proc. Natl. Acad. Sci. U.S.A.">
        <title>The diploid genome sequence of Candida albicans.</title>
        <authorList>
            <person name="Jones T."/>
            <person name="Federspiel N.A."/>
            <person name="Chibana H."/>
            <person name="Dungan J."/>
            <person name="Kalman S."/>
            <person name="Magee B.B."/>
            <person name="Newport G."/>
            <person name="Thorstenson Y.R."/>
            <person name="Agabian N."/>
            <person name="Magee P.T."/>
            <person name="Davis R.W."/>
            <person name="Scherer S."/>
        </authorList>
    </citation>
    <scope>NUCLEOTIDE SEQUENCE [LARGE SCALE GENOMIC DNA]</scope>
    <source>
        <strain>SC5314 / ATCC MYA-2876</strain>
    </source>
</reference>
<reference key="2">
    <citation type="journal article" date="2007" name="Genome Biol.">
        <title>Assembly of the Candida albicans genome into sixteen supercontigs aligned on the eight chromosomes.</title>
        <authorList>
            <person name="van het Hoog M."/>
            <person name="Rast T.J."/>
            <person name="Martchenko M."/>
            <person name="Grindle S."/>
            <person name="Dignard D."/>
            <person name="Hogues H."/>
            <person name="Cuomo C."/>
            <person name="Berriman M."/>
            <person name="Scherer S."/>
            <person name="Magee B.B."/>
            <person name="Whiteway M."/>
            <person name="Chibana H."/>
            <person name="Nantel A."/>
            <person name="Magee P.T."/>
        </authorList>
    </citation>
    <scope>GENOME REANNOTATION</scope>
    <source>
        <strain>SC5314 / ATCC MYA-2876</strain>
    </source>
</reference>
<reference key="3">
    <citation type="journal article" date="2013" name="Genome Biol.">
        <title>Assembly of a phased diploid Candida albicans genome facilitates allele-specific measurements and provides a simple model for repeat and indel structure.</title>
        <authorList>
            <person name="Muzzey D."/>
            <person name="Schwartz K."/>
            <person name="Weissman J.S."/>
            <person name="Sherlock G."/>
        </authorList>
    </citation>
    <scope>NUCLEOTIDE SEQUENCE [LARGE SCALE GENOMIC DNA]</scope>
    <scope>GENOME REANNOTATION</scope>
    <source>
        <strain>SC5314 / ATCC MYA-2876</strain>
    </source>
</reference>
<keyword id="KW-0443">Lipid metabolism</keyword>
<keyword id="KW-1185">Reference proteome</keyword>
<protein>
    <recommendedName>
        <fullName>Increased rDNA silencing protein 4</fullName>
    </recommendedName>
</protein>
<proteinExistence type="inferred from homology"/>
<comment type="function">
    <text evidence="1">Positive regulator of phosphatidylinositol 4,5-bisphosphate turnover and negatively regulates signaling through the cell integrity pathway. Involved in rDNA silencing (By similarity).</text>
</comment>
<comment type="similarity">
    <text evidence="5">Belongs to the IRS4 family.</text>
</comment>
<sequence>MSGNSAANAAALAAFNGIGKKKKESTTKLNGTDNNTNHLGVIGSTSNQTKQHQQQQQQPQALRTPLPAHPSRKKSNKFSQLKRLNTAPAMASLQPALQIASPSISPTQPSAPASALDSDPDYFTLSPHTIPSKNEIAKSPQTPQDMIRNVRQSIELKAIPNNAQAKRLSVDYSPQEMLKNLRHSLHSRTKTSPMLTTSDKMGQTMLAEMRDRLENTRRIASNSVASLSLSPNLDFNKSTSDVSNLSHHYDVDTVSTDSFASFNSSINDRHLPHGISIDVTNHDSDEDEIDDREREEDHEPLDNGELKSTNNKVTVSSRLRRKPPPGEDFQMQLNDKSRDTISSGSYSLNPDEVYSFTDPDSYENLVSEVEVGETTRLFPQFPDANHYHQHSSKFRKKHQKVKPINGIYYRDMDSSNTSDTEESTSNLPSRSTTPLLGQPQQQVHFRSTMRKANTKKDKKSRFNELKPWKNHNDLNYLTDQEKKRYEGIWASNKGNYMSQVVIKLHGVNYETQKDPKEEAKMEHSRTAALLSAAAVEDSNYNGNNSLHNLDSVEINQLICGPVVKRIWKRSRLPSDTLEKIWNLIDFRRDGTLNKNEFLVGMWLVDQCLYGRKLPKKVDNVVWDSLGGIGVNVTVKKKK</sequence>
<gene>
    <name type="primary">IRS4</name>
    <name type="ordered locus">CAALFM_C303660WA</name>
    <name type="ORF">CaO19.14215</name>
    <name type="ORF">CaO19.6953</name>
</gene>
<dbReference type="EMBL" id="CP017625">
    <property type="protein sequence ID" value="AOW28394.1"/>
    <property type="molecule type" value="Genomic_DNA"/>
</dbReference>
<dbReference type="RefSeq" id="XP_712754.2">
    <property type="nucleotide sequence ID" value="XM_707661.2"/>
</dbReference>
<dbReference type="SMR" id="Q59SR6"/>
<dbReference type="BioGRID" id="1228743">
    <property type="interactions" value="2"/>
</dbReference>
<dbReference type="FunCoup" id="Q59SR6">
    <property type="interactions" value="36"/>
</dbReference>
<dbReference type="STRING" id="237561.Q59SR6"/>
<dbReference type="EnsemblFungi" id="C3_03660W_A-T">
    <property type="protein sequence ID" value="C3_03660W_A-T-p1"/>
    <property type="gene ID" value="C3_03660W_A"/>
</dbReference>
<dbReference type="GeneID" id="3645650"/>
<dbReference type="KEGG" id="cal:CAALFM_C303660WA"/>
<dbReference type="CGD" id="CAL0000177117">
    <property type="gene designation" value="IRS4"/>
</dbReference>
<dbReference type="VEuPathDB" id="FungiDB:C3_03660W_A"/>
<dbReference type="eggNOG" id="KOG0998">
    <property type="taxonomic scope" value="Eukaryota"/>
</dbReference>
<dbReference type="HOGENOM" id="CLU_020874_0_0_1"/>
<dbReference type="InParanoid" id="Q59SR6"/>
<dbReference type="OMA" id="WDLVDFR"/>
<dbReference type="OrthoDB" id="10045710at2759"/>
<dbReference type="PHI-base" id="PHI:488"/>
<dbReference type="PRO" id="PR:Q59SR6"/>
<dbReference type="Proteomes" id="UP000000559">
    <property type="component" value="Chromosome 3"/>
</dbReference>
<dbReference type="GO" id="GO:0005737">
    <property type="term" value="C:cytoplasm"/>
    <property type="evidence" value="ECO:0000318"/>
    <property type="project" value="GO_Central"/>
</dbReference>
<dbReference type="GO" id="GO:0005886">
    <property type="term" value="C:plasma membrane"/>
    <property type="evidence" value="ECO:0000318"/>
    <property type="project" value="GO_Central"/>
</dbReference>
<dbReference type="GO" id="GO:0005509">
    <property type="term" value="F:calcium ion binding"/>
    <property type="evidence" value="ECO:0007669"/>
    <property type="project" value="InterPro"/>
</dbReference>
<dbReference type="GO" id="GO:0044406">
    <property type="term" value="P:adhesion of symbiont to host"/>
    <property type="evidence" value="ECO:0000315"/>
    <property type="project" value="CGD"/>
</dbReference>
<dbReference type="GO" id="GO:0009267">
    <property type="term" value="P:cellular response to starvation"/>
    <property type="evidence" value="ECO:0000315"/>
    <property type="project" value="CGD"/>
</dbReference>
<dbReference type="GO" id="GO:0030447">
    <property type="term" value="P:filamentous growth"/>
    <property type="evidence" value="ECO:0000315"/>
    <property type="project" value="CGD"/>
</dbReference>
<dbReference type="GO" id="GO:0036180">
    <property type="term" value="P:filamentous growth of a population of unicellular organisms in response to biotic stimulus"/>
    <property type="evidence" value="ECO:0000315"/>
    <property type="project" value="CGD"/>
</dbReference>
<dbReference type="GO" id="GO:0036170">
    <property type="term" value="P:filamentous growth of a population of unicellular organisms in response to starvation"/>
    <property type="evidence" value="ECO:0000315"/>
    <property type="project" value="CGD"/>
</dbReference>
<dbReference type="GO" id="GO:0031505">
    <property type="term" value="P:fungal-type cell wall organization"/>
    <property type="evidence" value="ECO:0000315"/>
    <property type="project" value="CGD"/>
</dbReference>
<dbReference type="GO" id="GO:0006629">
    <property type="term" value="P:lipid metabolic process"/>
    <property type="evidence" value="ECO:0007669"/>
    <property type="project" value="UniProtKB-KW"/>
</dbReference>
<dbReference type="CDD" id="cd00052">
    <property type="entry name" value="EH"/>
    <property type="match status" value="1"/>
</dbReference>
<dbReference type="FunFam" id="1.10.238.10:FF:000326">
    <property type="entry name" value="IRS4p EH domain-containing protein"/>
    <property type="match status" value="1"/>
</dbReference>
<dbReference type="Gene3D" id="1.10.238.10">
    <property type="entry name" value="EF-hand"/>
    <property type="match status" value="1"/>
</dbReference>
<dbReference type="InterPro" id="IPR011992">
    <property type="entry name" value="EF-hand-dom_pair"/>
</dbReference>
<dbReference type="InterPro" id="IPR002048">
    <property type="entry name" value="EF_hand_dom"/>
</dbReference>
<dbReference type="InterPro" id="IPR000261">
    <property type="entry name" value="EH_dom"/>
</dbReference>
<dbReference type="Pfam" id="PF12763">
    <property type="entry name" value="EH"/>
    <property type="match status" value="1"/>
</dbReference>
<dbReference type="SMART" id="SM00027">
    <property type="entry name" value="EH"/>
    <property type="match status" value="1"/>
</dbReference>
<dbReference type="SUPFAM" id="SSF47473">
    <property type="entry name" value="EF-hand"/>
    <property type="match status" value="1"/>
</dbReference>
<dbReference type="PROSITE" id="PS50222">
    <property type="entry name" value="EF_HAND_2"/>
    <property type="match status" value="1"/>
</dbReference>
<dbReference type="PROSITE" id="PS50031">
    <property type="entry name" value="EH"/>
    <property type="match status" value="1"/>
</dbReference>
<accession>Q59SR6</accession>
<accession>A0A1D8PJU4</accession>
<name>IRS4_CANAL</name>